<dbReference type="EC" id="2.1.1.-" evidence="1"/>
<dbReference type="EMBL" id="CP000458">
    <property type="protein sequence ID" value="ABK07356.1"/>
    <property type="molecule type" value="Genomic_DNA"/>
</dbReference>
<dbReference type="RefSeq" id="WP_011544529.1">
    <property type="nucleotide sequence ID" value="NC_008542.1"/>
</dbReference>
<dbReference type="SMR" id="A0K4C9"/>
<dbReference type="KEGG" id="bch:Bcen2424_0603"/>
<dbReference type="HOGENOM" id="CLU_049382_4_1_4"/>
<dbReference type="GO" id="GO:0005829">
    <property type="term" value="C:cytosol"/>
    <property type="evidence" value="ECO:0007669"/>
    <property type="project" value="TreeGrafter"/>
</dbReference>
<dbReference type="GO" id="GO:0016279">
    <property type="term" value="F:protein-lysine N-methyltransferase activity"/>
    <property type="evidence" value="ECO:0007669"/>
    <property type="project" value="TreeGrafter"/>
</dbReference>
<dbReference type="GO" id="GO:0032259">
    <property type="term" value="P:methylation"/>
    <property type="evidence" value="ECO:0007669"/>
    <property type="project" value="UniProtKB-KW"/>
</dbReference>
<dbReference type="CDD" id="cd02440">
    <property type="entry name" value="AdoMet_MTases"/>
    <property type="match status" value="1"/>
</dbReference>
<dbReference type="Gene3D" id="3.40.50.150">
    <property type="entry name" value="Vaccinia Virus protein VP39"/>
    <property type="match status" value="1"/>
</dbReference>
<dbReference type="HAMAP" id="MF_00735">
    <property type="entry name" value="Methyltr_PrmA"/>
    <property type="match status" value="1"/>
</dbReference>
<dbReference type="InterPro" id="IPR050078">
    <property type="entry name" value="Ribosomal_L11_MeTrfase_PrmA"/>
</dbReference>
<dbReference type="InterPro" id="IPR004498">
    <property type="entry name" value="Ribosomal_PrmA_MeTrfase"/>
</dbReference>
<dbReference type="InterPro" id="IPR029063">
    <property type="entry name" value="SAM-dependent_MTases_sf"/>
</dbReference>
<dbReference type="NCBIfam" id="TIGR00406">
    <property type="entry name" value="prmA"/>
    <property type="match status" value="1"/>
</dbReference>
<dbReference type="PANTHER" id="PTHR43648">
    <property type="entry name" value="ELECTRON TRANSFER FLAVOPROTEIN BETA SUBUNIT LYSINE METHYLTRANSFERASE"/>
    <property type="match status" value="1"/>
</dbReference>
<dbReference type="PANTHER" id="PTHR43648:SF1">
    <property type="entry name" value="ELECTRON TRANSFER FLAVOPROTEIN BETA SUBUNIT LYSINE METHYLTRANSFERASE"/>
    <property type="match status" value="1"/>
</dbReference>
<dbReference type="Pfam" id="PF06325">
    <property type="entry name" value="PrmA"/>
    <property type="match status" value="1"/>
</dbReference>
<dbReference type="PIRSF" id="PIRSF000401">
    <property type="entry name" value="RPL11_MTase"/>
    <property type="match status" value="1"/>
</dbReference>
<dbReference type="SUPFAM" id="SSF53335">
    <property type="entry name" value="S-adenosyl-L-methionine-dependent methyltransferases"/>
    <property type="match status" value="1"/>
</dbReference>
<name>PRMA_BURCH</name>
<accession>A0K4C9</accession>
<evidence type="ECO:0000255" key="1">
    <source>
        <dbReference type="HAMAP-Rule" id="MF_00735"/>
    </source>
</evidence>
<protein>
    <recommendedName>
        <fullName evidence="1">Ribosomal protein L11 methyltransferase</fullName>
        <shortName evidence="1">L11 Mtase</shortName>
        <ecNumber evidence="1">2.1.1.-</ecNumber>
    </recommendedName>
</protein>
<organism>
    <name type="scientific">Burkholderia cenocepacia (strain HI2424)</name>
    <dbReference type="NCBI Taxonomy" id="331272"/>
    <lineage>
        <taxon>Bacteria</taxon>
        <taxon>Pseudomonadati</taxon>
        <taxon>Pseudomonadota</taxon>
        <taxon>Betaproteobacteria</taxon>
        <taxon>Burkholderiales</taxon>
        <taxon>Burkholderiaceae</taxon>
        <taxon>Burkholderia</taxon>
        <taxon>Burkholderia cepacia complex</taxon>
    </lineage>
</organism>
<keyword id="KW-0963">Cytoplasm</keyword>
<keyword id="KW-0489">Methyltransferase</keyword>
<keyword id="KW-0949">S-adenosyl-L-methionine</keyword>
<keyword id="KW-0808">Transferase</keyword>
<gene>
    <name evidence="1" type="primary">prmA</name>
    <name type="ordered locus">Bcen2424_0603</name>
</gene>
<feature type="chain" id="PRO_1000045991" description="Ribosomal protein L11 methyltransferase">
    <location>
        <begin position="1"/>
        <end position="300"/>
    </location>
</feature>
<feature type="binding site" evidence="1">
    <location>
        <position position="152"/>
    </location>
    <ligand>
        <name>S-adenosyl-L-methionine</name>
        <dbReference type="ChEBI" id="CHEBI:59789"/>
    </ligand>
</feature>
<feature type="binding site" evidence="1">
    <location>
        <position position="173"/>
    </location>
    <ligand>
        <name>S-adenosyl-L-methionine</name>
        <dbReference type="ChEBI" id="CHEBI:59789"/>
    </ligand>
</feature>
<feature type="binding site" evidence="1">
    <location>
        <position position="195"/>
    </location>
    <ligand>
        <name>S-adenosyl-L-methionine</name>
        <dbReference type="ChEBI" id="CHEBI:59789"/>
    </ligand>
</feature>
<feature type="binding site" evidence="1">
    <location>
        <position position="234"/>
    </location>
    <ligand>
        <name>S-adenosyl-L-methionine</name>
        <dbReference type="ChEBI" id="CHEBI:59789"/>
    </ligand>
</feature>
<reference key="1">
    <citation type="submission" date="2006-08" db="EMBL/GenBank/DDBJ databases">
        <title>Complete sequence of chromosome 1 of Burkholderia cenocepacia HI2424.</title>
        <authorList>
            <person name="Copeland A."/>
            <person name="Lucas S."/>
            <person name="Lapidus A."/>
            <person name="Barry K."/>
            <person name="Detter J.C."/>
            <person name="Glavina del Rio T."/>
            <person name="Hammon N."/>
            <person name="Israni S."/>
            <person name="Pitluck S."/>
            <person name="Chain P."/>
            <person name="Malfatti S."/>
            <person name="Shin M."/>
            <person name="Vergez L."/>
            <person name="Schmutz J."/>
            <person name="Larimer F."/>
            <person name="Land M."/>
            <person name="Hauser L."/>
            <person name="Kyrpides N."/>
            <person name="Kim E."/>
            <person name="LiPuma J.J."/>
            <person name="Gonzalez C.F."/>
            <person name="Konstantinidis K."/>
            <person name="Tiedje J.M."/>
            <person name="Richardson P."/>
        </authorList>
    </citation>
    <scope>NUCLEOTIDE SEQUENCE [LARGE SCALE GENOMIC DNA]</scope>
    <source>
        <strain>HI2424</strain>
    </source>
</reference>
<sequence>MSYRELVVELAREHAEALSDALLDLGALSVSVEDADADTPDEQPLFGEPGLVPDRTAWQHSRVVALLSADHEPAVLLAAAANEIGLAETPKFVVREVEEQDWVRLTQSQFEPIPIGERIWVVPSWHDAPDPDALVLELDPGLAFGTGSHPTTRLCMEWLEQSVKPGQSVLDYGCGSGILAILAKKCGANPVIGIDIDPQAVESARQNSERNRAEVTYGLPDACPDGEFDIVVANILSNPLKLMASMLASKVKPGGRIALSGVLARQADEVAAVYARYVDISVWREHEGWVCLAGTRRESH</sequence>
<proteinExistence type="inferred from homology"/>
<comment type="function">
    <text evidence="1">Methylates ribosomal protein L11.</text>
</comment>
<comment type="catalytic activity">
    <reaction evidence="1">
        <text>L-lysyl-[protein] + 3 S-adenosyl-L-methionine = N(6),N(6),N(6)-trimethyl-L-lysyl-[protein] + 3 S-adenosyl-L-homocysteine + 3 H(+)</text>
        <dbReference type="Rhea" id="RHEA:54192"/>
        <dbReference type="Rhea" id="RHEA-COMP:9752"/>
        <dbReference type="Rhea" id="RHEA-COMP:13826"/>
        <dbReference type="ChEBI" id="CHEBI:15378"/>
        <dbReference type="ChEBI" id="CHEBI:29969"/>
        <dbReference type="ChEBI" id="CHEBI:57856"/>
        <dbReference type="ChEBI" id="CHEBI:59789"/>
        <dbReference type="ChEBI" id="CHEBI:61961"/>
    </reaction>
</comment>
<comment type="subcellular location">
    <subcellularLocation>
        <location evidence="1">Cytoplasm</location>
    </subcellularLocation>
</comment>
<comment type="similarity">
    <text evidence="1">Belongs to the methyltransferase superfamily. PrmA family.</text>
</comment>